<gene>
    <name evidence="1" type="primary">pfkA</name>
    <name type="ordered locus">STM4062</name>
</gene>
<protein>
    <recommendedName>
        <fullName evidence="1">ATP-dependent 6-phosphofructokinase</fullName>
        <shortName evidence="1">ATP-PFK</shortName>
        <shortName evidence="1">Phosphofructokinase</shortName>
        <ecNumber evidence="1">2.7.1.11</ecNumber>
    </recommendedName>
    <alternativeName>
        <fullName evidence="1">Phosphohexokinase</fullName>
    </alternativeName>
</protein>
<feature type="chain" id="PRO_0000111973" description="ATP-dependent 6-phosphofructokinase">
    <location>
        <begin position="1"/>
        <end position="320"/>
    </location>
</feature>
<feature type="active site" description="Proton acceptor" evidence="1">
    <location>
        <position position="128"/>
    </location>
</feature>
<feature type="binding site" evidence="1">
    <location>
        <position position="12"/>
    </location>
    <ligand>
        <name>ATP</name>
        <dbReference type="ChEBI" id="CHEBI:30616"/>
    </ligand>
</feature>
<feature type="binding site" evidence="1">
    <location>
        <begin position="22"/>
        <end position="26"/>
    </location>
    <ligand>
        <name>ADP</name>
        <dbReference type="ChEBI" id="CHEBI:456216"/>
        <note>allosteric activator; ligand shared between dimeric partners</note>
    </ligand>
</feature>
<feature type="binding site" evidence="1">
    <location>
        <begin position="55"/>
        <end position="60"/>
    </location>
    <ligand>
        <name>ADP</name>
        <dbReference type="ChEBI" id="CHEBI:456216"/>
        <note>allosteric activator; ligand shared between dimeric partners</note>
    </ligand>
</feature>
<feature type="binding site" evidence="1">
    <location>
        <begin position="73"/>
        <end position="74"/>
    </location>
    <ligand>
        <name>ATP</name>
        <dbReference type="ChEBI" id="CHEBI:30616"/>
    </ligand>
</feature>
<feature type="binding site" evidence="1">
    <location>
        <begin position="103"/>
        <end position="106"/>
    </location>
    <ligand>
        <name>ATP</name>
        <dbReference type="ChEBI" id="CHEBI:30616"/>
    </ligand>
</feature>
<feature type="binding site" evidence="1">
    <location>
        <position position="104"/>
    </location>
    <ligand>
        <name>Mg(2+)</name>
        <dbReference type="ChEBI" id="CHEBI:18420"/>
        <note>catalytic</note>
    </ligand>
</feature>
<feature type="binding site" description="in other chain" evidence="1">
    <location>
        <begin position="126"/>
        <end position="128"/>
    </location>
    <ligand>
        <name>substrate</name>
        <note>ligand shared between dimeric partners</note>
    </ligand>
</feature>
<feature type="binding site" description="in other chain" evidence="1">
    <location>
        <position position="155"/>
    </location>
    <ligand>
        <name>ADP</name>
        <dbReference type="ChEBI" id="CHEBI:456216"/>
        <note>allosteric activator; ligand shared between dimeric partners</note>
    </ligand>
</feature>
<feature type="binding site" evidence="1">
    <location>
        <position position="163"/>
    </location>
    <ligand>
        <name>substrate</name>
        <note>ligand shared between dimeric partners</note>
    </ligand>
</feature>
<feature type="binding site" description="in other chain" evidence="1">
    <location>
        <begin position="170"/>
        <end position="172"/>
    </location>
    <ligand>
        <name>substrate</name>
        <note>ligand shared between dimeric partners</note>
    </ligand>
</feature>
<feature type="binding site" description="in other chain" evidence="1">
    <location>
        <begin position="186"/>
        <end position="188"/>
    </location>
    <ligand>
        <name>ADP</name>
        <dbReference type="ChEBI" id="CHEBI:456216"/>
        <note>allosteric activator; ligand shared between dimeric partners</note>
    </ligand>
</feature>
<feature type="binding site" description="in other chain" evidence="1">
    <location>
        <position position="212"/>
    </location>
    <ligand>
        <name>ADP</name>
        <dbReference type="ChEBI" id="CHEBI:456216"/>
        <note>allosteric activator; ligand shared between dimeric partners</note>
    </ligand>
</feature>
<feature type="binding site" description="in other chain" evidence="1">
    <location>
        <begin position="214"/>
        <end position="216"/>
    </location>
    <ligand>
        <name>ADP</name>
        <dbReference type="ChEBI" id="CHEBI:456216"/>
        <note>allosteric activator; ligand shared between dimeric partners</note>
    </ligand>
</feature>
<feature type="binding site" description="in other chain" evidence="1">
    <location>
        <position position="223"/>
    </location>
    <ligand>
        <name>substrate</name>
        <note>ligand shared between dimeric partners</note>
    </ligand>
</feature>
<feature type="binding site" evidence="1">
    <location>
        <position position="244"/>
    </location>
    <ligand>
        <name>substrate</name>
        <note>ligand shared between dimeric partners</note>
    </ligand>
</feature>
<feature type="binding site" description="in other chain" evidence="1">
    <location>
        <begin position="250"/>
        <end position="253"/>
    </location>
    <ligand>
        <name>substrate</name>
        <note>ligand shared between dimeric partners</note>
    </ligand>
</feature>
<evidence type="ECO:0000255" key="1">
    <source>
        <dbReference type="HAMAP-Rule" id="MF_00339"/>
    </source>
</evidence>
<organism>
    <name type="scientific">Salmonella typhimurium (strain LT2 / SGSC1412 / ATCC 700720)</name>
    <dbReference type="NCBI Taxonomy" id="99287"/>
    <lineage>
        <taxon>Bacteria</taxon>
        <taxon>Pseudomonadati</taxon>
        <taxon>Pseudomonadota</taxon>
        <taxon>Gammaproteobacteria</taxon>
        <taxon>Enterobacterales</taxon>
        <taxon>Enterobacteriaceae</taxon>
        <taxon>Salmonella</taxon>
    </lineage>
</organism>
<name>PFKA_SALTY</name>
<keyword id="KW-0021">Allosteric enzyme</keyword>
<keyword id="KW-0067">ATP-binding</keyword>
<keyword id="KW-0963">Cytoplasm</keyword>
<keyword id="KW-0324">Glycolysis</keyword>
<keyword id="KW-0418">Kinase</keyword>
<keyword id="KW-0460">Magnesium</keyword>
<keyword id="KW-0479">Metal-binding</keyword>
<keyword id="KW-0547">Nucleotide-binding</keyword>
<keyword id="KW-1185">Reference proteome</keyword>
<keyword id="KW-0808">Transferase</keyword>
<reference key="1">
    <citation type="journal article" date="2001" name="Nature">
        <title>Complete genome sequence of Salmonella enterica serovar Typhimurium LT2.</title>
        <authorList>
            <person name="McClelland M."/>
            <person name="Sanderson K.E."/>
            <person name="Spieth J."/>
            <person name="Clifton S.W."/>
            <person name="Latreille P."/>
            <person name="Courtney L."/>
            <person name="Porwollik S."/>
            <person name="Ali J."/>
            <person name="Dante M."/>
            <person name="Du F."/>
            <person name="Hou S."/>
            <person name="Layman D."/>
            <person name="Leonard S."/>
            <person name="Nguyen C."/>
            <person name="Scott K."/>
            <person name="Holmes A."/>
            <person name="Grewal N."/>
            <person name="Mulvaney E."/>
            <person name="Ryan E."/>
            <person name="Sun H."/>
            <person name="Florea L."/>
            <person name="Miller W."/>
            <person name="Stoneking T."/>
            <person name="Nhan M."/>
            <person name="Waterston R."/>
            <person name="Wilson R.K."/>
        </authorList>
    </citation>
    <scope>NUCLEOTIDE SEQUENCE [LARGE SCALE GENOMIC DNA]</scope>
    <source>
        <strain>LT2 / SGSC1412 / ATCC 700720</strain>
    </source>
</reference>
<comment type="function">
    <text evidence="1">Catalyzes the phosphorylation of D-fructose 6-phosphate to fructose 1,6-bisphosphate by ATP, the first committing step of glycolysis.</text>
</comment>
<comment type="catalytic activity">
    <reaction evidence="1">
        <text>beta-D-fructose 6-phosphate + ATP = beta-D-fructose 1,6-bisphosphate + ADP + H(+)</text>
        <dbReference type="Rhea" id="RHEA:16109"/>
        <dbReference type="ChEBI" id="CHEBI:15378"/>
        <dbReference type="ChEBI" id="CHEBI:30616"/>
        <dbReference type="ChEBI" id="CHEBI:32966"/>
        <dbReference type="ChEBI" id="CHEBI:57634"/>
        <dbReference type="ChEBI" id="CHEBI:456216"/>
        <dbReference type="EC" id="2.7.1.11"/>
    </reaction>
</comment>
<comment type="cofactor">
    <cofactor evidence="1">
        <name>Mg(2+)</name>
        <dbReference type="ChEBI" id="CHEBI:18420"/>
    </cofactor>
</comment>
<comment type="activity regulation">
    <text evidence="1">Allosterically activated by ADP and other diphosphonucleosides, and allosterically inhibited by phosphoenolpyruvate.</text>
</comment>
<comment type="pathway">
    <text evidence="1">Carbohydrate degradation; glycolysis; D-glyceraldehyde 3-phosphate and glycerone phosphate from D-glucose: step 3/4.</text>
</comment>
<comment type="subunit">
    <text evidence="1">Homotetramer.</text>
</comment>
<comment type="subcellular location">
    <subcellularLocation>
        <location evidence="1">Cytoplasm</location>
    </subcellularLocation>
</comment>
<comment type="similarity">
    <text evidence="1">Belongs to the phosphofructokinase type A (PFKA) family. ATP-dependent PFK group I subfamily. Prokaryotic clade 'B1' sub-subfamily.</text>
</comment>
<dbReference type="EC" id="2.7.1.11" evidence="1"/>
<dbReference type="EMBL" id="AE006468">
    <property type="protein sequence ID" value="AAL22902.1"/>
    <property type="molecule type" value="Genomic_DNA"/>
</dbReference>
<dbReference type="RefSeq" id="NP_462943.1">
    <property type="nucleotide sequence ID" value="NC_003197.2"/>
</dbReference>
<dbReference type="RefSeq" id="WP_000591793.1">
    <property type="nucleotide sequence ID" value="NC_003197.2"/>
</dbReference>
<dbReference type="SMR" id="P65692"/>
<dbReference type="STRING" id="99287.STM4062"/>
<dbReference type="PaxDb" id="99287-STM4062"/>
<dbReference type="GeneID" id="1255589"/>
<dbReference type="GeneID" id="66758327"/>
<dbReference type="KEGG" id="stm:STM4062"/>
<dbReference type="PATRIC" id="fig|99287.12.peg.4282"/>
<dbReference type="HOGENOM" id="CLU_020655_0_1_6"/>
<dbReference type="OMA" id="GYQGMIE"/>
<dbReference type="PhylomeDB" id="P65692"/>
<dbReference type="BioCyc" id="SENT99287:STM4062-MONOMER"/>
<dbReference type="UniPathway" id="UPA00109">
    <property type="reaction ID" value="UER00182"/>
</dbReference>
<dbReference type="Proteomes" id="UP000001014">
    <property type="component" value="Chromosome"/>
</dbReference>
<dbReference type="GO" id="GO:0005945">
    <property type="term" value="C:6-phosphofructokinase complex"/>
    <property type="evidence" value="ECO:0000318"/>
    <property type="project" value="GO_Central"/>
</dbReference>
<dbReference type="GO" id="GO:0003872">
    <property type="term" value="F:6-phosphofructokinase activity"/>
    <property type="evidence" value="ECO:0000318"/>
    <property type="project" value="GO_Central"/>
</dbReference>
<dbReference type="GO" id="GO:0005524">
    <property type="term" value="F:ATP binding"/>
    <property type="evidence" value="ECO:0007669"/>
    <property type="project" value="UniProtKB-KW"/>
</dbReference>
<dbReference type="GO" id="GO:0070095">
    <property type="term" value="F:fructose-6-phosphate binding"/>
    <property type="evidence" value="ECO:0000318"/>
    <property type="project" value="GO_Central"/>
</dbReference>
<dbReference type="GO" id="GO:0046872">
    <property type="term" value="F:metal ion binding"/>
    <property type="evidence" value="ECO:0007669"/>
    <property type="project" value="UniProtKB-KW"/>
</dbReference>
<dbReference type="GO" id="GO:0061621">
    <property type="term" value="P:canonical glycolysis"/>
    <property type="evidence" value="ECO:0000318"/>
    <property type="project" value="GO_Central"/>
</dbReference>
<dbReference type="GO" id="GO:0030388">
    <property type="term" value="P:fructose 1,6-bisphosphate metabolic process"/>
    <property type="evidence" value="ECO:0000318"/>
    <property type="project" value="GO_Central"/>
</dbReference>
<dbReference type="GO" id="GO:0006002">
    <property type="term" value="P:fructose 6-phosphate metabolic process"/>
    <property type="evidence" value="ECO:0000318"/>
    <property type="project" value="GO_Central"/>
</dbReference>
<dbReference type="CDD" id="cd00763">
    <property type="entry name" value="Bacterial_PFK"/>
    <property type="match status" value="1"/>
</dbReference>
<dbReference type="FunFam" id="3.40.50.450:FF:000001">
    <property type="entry name" value="ATP-dependent 6-phosphofructokinase"/>
    <property type="match status" value="1"/>
</dbReference>
<dbReference type="FunFam" id="3.40.50.460:FF:000002">
    <property type="entry name" value="ATP-dependent 6-phosphofructokinase"/>
    <property type="match status" value="1"/>
</dbReference>
<dbReference type="Gene3D" id="3.40.50.450">
    <property type="match status" value="1"/>
</dbReference>
<dbReference type="Gene3D" id="3.40.50.460">
    <property type="entry name" value="Phosphofructokinase domain"/>
    <property type="match status" value="1"/>
</dbReference>
<dbReference type="HAMAP" id="MF_00339">
    <property type="entry name" value="Phosphofructokinase_I_B1"/>
    <property type="match status" value="1"/>
</dbReference>
<dbReference type="InterPro" id="IPR022953">
    <property type="entry name" value="ATP_PFK"/>
</dbReference>
<dbReference type="InterPro" id="IPR012003">
    <property type="entry name" value="ATP_PFK_prok-type"/>
</dbReference>
<dbReference type="InterPro" id="IPR012828">
    <property type="entry name" value="PFKA_ATP_prok"/>
</dbReference>
<dbReference type="InterPro" id="IPR015912">
    <property type="entry name" value="Phosphofructokinase_CS"/>
</dbReference>
<dbReference type="InterPro" id="IPR000023">
    <property type="entry name" value="Phosphofructokinase_dom"/>
</dbReference>
<dbReference type="InterPro" id="IPR035966">
    <property type="entry name" value="PKF_sf"/>
</dbReference>
<dbReference type="NCBIfam" id="TIGR02482">
    <property type="entry name" value="PFKA_ATP"/>
    <property type="match status" value="1"/>
</dbReference>
<dbReference type="NCBIfam" id="NF002872">
    <property type="entry name" value="PRK03202.1"/>
    <property type="match status" value="1"/>
</dbReference>
<dbReference type="PANTHER" id="PTHR13697:SF4">
    <property type="entry name" value="ATP-DEPENDENT 6-PHOSPHOFRUCTOKINASE"/>
    <property type="match status" value="1"/>
</dbReference>
<dbReference type="PANTHER" id="PTHR13697">
    <property type="entry name" value="PHOSPHOFRUCTOKINASE"/>
    <property type="match status" value="1"/>
</dbReference>
<dbReference type="Pfam" id="PF00365">
    <property type="entry name" value="PFK"/>
    <property type="match status" value="1"/>
</dbReference>
<dbReference type="PIRSF" id="PIRSF000532">
    <property type="entry name" value="ATP_PFK_prok"/>
    <property type="match status" value="1"/>
</dbReference>
<dbReference type="PRINTS" id="PR00476">
    <property type="entry name" value="PHFRCTKINASE"/>
</dbReference>
<dbReference type="SUPFAM" id="SSF53784">
    <property type="entry name" value="Phosphofructokinase"/>
    <property type="match status" value="1"/>
</dbReference>
<dbReference type="PROSITE" id="PS00433">
    <property type="entry name" value="PHOSPHOFRUCTOKINASE"/>
    <property type="match status" value="1"/>
</dbReference>
<proteinExistence type="inferred from homology"/>
<accession>P65692</accession>
<accession>Q8XG19</accession>
<sequence>MIKKIGVLTSGGDAPGMNAAIRGVVRAALTEGLEVMGIYDGYLGLYEDRMVQLDRYSVSDMINRGGTFLGSARFPEFRDENIRAVAIENLKKRGIDALVVIGGDGSYMGAKRLTEMGFPCIGLPGTIDNDIKGTDYTIGYFTALGTVVEAIDRLRDTSSSHQRISIVEVMGRYCGDLTLAAAIAGGCEFIVVPEVEFNREDLVAEIKAGIAKGKKHAIVAITEHMCDVDELAHFIEKETGRETRATVLGHIQRGGSPVPYDRILASRMGAYAIDLLLEGHGGRCVGIQNEQLVHHDIIDAIENMKRPFKSDWMECAKKLY</sequence>